<name>LPSC_CLAPU</name>
<gene>
    <name evidence="16" type="primary">lpsC</name>
    <name evidence="15" type="synonym">cpps3</name>
</gene>
<proteinExistence type="evidence at protein level"/>
<reference key="1">
    <citation type="journal article" date="2005" name="Phytochemistry">
        <title>The ergot alkaloid gene cluster in Claviceps purpurea: extension of the cluster sequence and intra species evolution.</title>
        <authorList>
            <person name="Haarmann T."/>
            <person name="Machado C."/>
            <person name="Lubbe Y."/>
            <person name="Correia T."/>
            <person name="Schardl C.L."/>
            <person name="Panaccione D.G."/>
            <person name="Tudzynski P."/>
        </authorList>
    </citation>
    <scope>NUCLEOTIDE SEQUENCE [GENOMIC DNA]</scope>
    <scope>IDENTIFICATION IN THE EAS CLUSTER</scope>
    <scope>FUNCTION</scope>
    <scope>DOMAIN</scope>
    <source>
        <strain>P1 / 1029/N5</strain>
    </source>
</reference>
<reference key="2">
    <citation type="journal article" date="2001" name="Appl. Microbiol. Biotechnol.">
        <title>Biotechnology and genetics of ergot alkaloids.</title>
        <authorList>
            <person name="Tudzynski P."/>
            <person name="Correia T."/>
            <person name="Keller U."/>
        </authorList>
    </citation>
    <scope>BIOTECHNOLOGY</scope>
    <source>
        <strain>P1 / 1029/N5</strain>
    </source>
</reference>
<reference key="3">
    <citation type="journal article" date="2003" name="Chem. Biol.">
        <title>Molecular cloning and analysis of the ergopeptine assembly system in the ergot fungus Claviceps purpurea.</title>
        <authorList>
            <person name="Correia T."/>
            <person name="Grammel N."/>
            <person name="Ortel I."/>
            <person name="Keller U."/>
            <person name="Tudzynski P."/>
        </authorList>
    </citation>
    <scope>FUNCTION</scope>
</reference>
<reference key="4">
    <citation type="journal article" date="2004" name="Fungal Genet. Biol.">
        <title>The determinant step in ergot alkaloid biosynthesis by an endophyte of perennial ryegrass.</title>
        <authorList>
            <person name="Wang J."/>
            <person name="Machado C."/>
            <person name="Panaccione D.G."/>
            <person name="Tsai H.-F."/>
            <person name="Schardl C.L."/>
        </authorList>
    </citation>
    <scope>FUNCTION</scope>
    <source>
        <strain>ATCC 20102 / Farmitalia FI 32/17</strain>
    </source>
</reference>
<reference key="5">
    <citation type="journal article" date="2006" name="ChemBioChem">
        <title>Identification of the cytochrome P450 monooxygenase that bridges the clavine and ergoline alkaloid pathways.</title>
        <authorList>
            <person name="Haarmann T."/>
            <person name="Ortel I."/>
            <person name="Tudzynski P."/>
            <person name="Keller U."/>
        </authorList>
    </citation>
    <scope>FUNCTION</scope>
    <source>
        <strain>P1 / 1029/N5</strain>
    </source>
</reference>
<reference key="6">
    <citation type="journal article" date="2007" name="Appl. Environ. Microbiol.">
        <title>A complex ergovaline gene cluster in epichloe endophytes of grasses.</title>
        <authorList>
            <person name="Fleetwood D.J."/>
            <person name="Scott B."/>
            <person name="Lane G.A."/>
            <person name="Tanaka A."/>
            <person name="Johnson R.D."/>
        </authorList>
    </citation>
    <scope>FUNCTION</scope>
</reference>
<reference key="7">
    <citation type="journal article" date="2007" name="Appl. Environ. Microbiol.">
        <title>Comparison of ergot alkaloid biosynthesis gene clusters in Claviceps species indicates loss of late pathway steps in evolution of C. fusiformis.</title>
        <authorList>
            <person name="Lorenz N."/>
            <person name="Wilson E.V."/>
            <person name="Machado C."/>
            <person name="Schardl C.L."/>
            <person name="Tudzynski P."/>
        </authorList>
    </citation>
    <scope>FUNCTION</scope>
</reference>
<reference key="8">
    <citation type="journal article" date="2008" name="Fungal Genet. Biol.">
        <title>Use of a nonhomologous end joining deficient strain (Deltaku70) of the ergot fungus Claviceps purpurea for identification of a nonribosomal peptide synthetase gene involved in ergotamine biosynthesis.</title>
        <authorList>
            <person name="Haarmann T."/>
            <person name="Lorenz N."/>
            <person name="Tudzynski P."/>
        </authorList>
    </citation>
    <scope>FUNCTION</scope>
</reference>
<reference key="9">
    <citation type="journal article" date="2009" name="J. Biol. Chem.">
        <title>Combinatorial assembly of simple and complex D-lysergic acid alkaloid peptide classes in the ergot fungus Claviceps purpurea.</title>
        <authorList>
            <person name="Ortel I."/>
            <person name="Keller U."/>
        </authorList>
    </citation>
    <scope>FUNCTION</scope>
    <scope>DOMAIN</scope>
    <scope>CATALYTIC ACTIVITY</scope>
    <scope>PATHWAY</scope>
</reference>
<reference key="10">
    <citation type="journal article" date="2010" name="Appl. Environ. Microbiol.">
        <title>Alkaloid cluster gene ccsA of the ergot fungus Claviceps purpurea encodes chanoclavine I synthase, a flavin adenine dinucleotide-containing oxidoreductase mediating the transformation of N-methyl-dimethylallyltryptophan to chanoclavine I.</title>
        <authorList>
            <person name="Lorenz N."/>
            <person name="Olsovska J."/>
            <person name="Sulc M."/>
            <person name="Tudzynski P."/>
        </authorList>
    </citation>
    <scope>FUNCTION</scope>
</reference>
<reference key="11">
    <citation type="journal article" date="2010" name="J. Am. Chem. Soc.">
        <title>Controlling a structural branch point in ergot alkaloid biosynthesis.</title>
        <authorList>
            <person name="Cheng J.Z."/>
            <person name="Coyle C.M."/>
            <person name="Panaccione D.G."/>
            <person name="O'Connor S.E."/>
        </authorList>
    </citation>
    <scope>FUNCTION</scope>
    <source>
        <strain>ATCC 20102 / Farmitalia FI 32/17</strain>
    </source>
</reference>
<reference key="12">
    <citation type="journal article" date="2011" name="Curr. Genet.">
        <title>Ergot cluster-encoded catalase is required for synthesis of chanoclavine-I in Aspergillus fumigatus.</title>
        <authorList>
            <person name="Goetz K.E."/>
            <person name="Coyle C.M."/>
            <person name="Cheng J.Z."/>
            <person name="O'Connor S.E."/>
            <person name="Panaccione D.G."/>
        </authorList>
    </citation>
    <scope>FUNCTION</scope>
</reference>
<reference key="13">
    <citation type="journal article" date="2011" name="Org. Biomol. Chem.">
        <title>New insights into ergot alkaloid biosynthesis in Claviceps purpurea: an agroclavine synthase EasG catalyses, via a non-enzymatic adduct with reduced glutathione, the conversion of chanoclavine-I aldehyde to agroclavine.</title>
        <authorList>
            <person name="Matuschek M."/>
            <person name="Wallwey C."/>
            <person name="Xie X."/>
            <person name="Li S.M."/>
        </authorList>
    </citation>
    <scope>FUNCTION</scope>
</reference>
<reference key="14">
    <citation type="journal article" date="2014" name="Chem. Biol.">
        <title>Cyclolization of D-lysergic acid alkaloid peptides.</title>
        <authorList>
            <person name="Havemann J."/>
            <person name="Vogel D."/>
            <person name="Loll B."/>
            <person name="Keller U."/>
        </authorList>
    </citation>
    <scope>FUNCTION</scope>
</reference>
<evidence type="ECO:0000250" key="1">
    <source>
        <dbReference type="UniProtKB" id="Q50EL0"/>
    </source>
</evidence>
<evidence type="ECO:0000255" key="2"/>
<evidence type="ECO:0000255" key="3">
    <source>
        <dbReference type="PROSITE-ProRule" id="PRU00258"/>
    </source>
</evidence>
<evidence type="ECO:0000269" key="4">
    <source>
    </source>
</evidence>
<evidence type="ECO:0000269" key="5">
    <source>
    </source>
</evidence>
<evidence type="ECO:0000269" key="6">
    <source>
    </source>
</evidence>
<evidence type="ECO:0000269" key="7">
    <source>
    </source>
</evidence>
<evidence type="ECO:0000269" key="8">
    <source>
    </source>
</evidence>
<evidence type="ECO:0000269" key="9">
    <source>
    </source>
</evidence>
<evidence type="ECO:0000269" key="10">
    <source>
    </source>
</evidence>
<evidence type="ECO:0000269" key="11">
    <source>
    </source>
</evidence>
<evidence type="ECO:0000269" key="12">
    <source>
    </source>
</evidence>
<evidence type="ECO:0000269" key="13">
    <source>
    </source>
</evidence>
<evidence type="ECO:0000269" key="14">
    <source>
    </source>
</evidence>
<evidence type="ECO:0000303" key="15">
    <source>
    </source>
</evidence>
<evidence type="ECO:0000303" key="16">
    <source>
    </source>
</evidence>
<evidence type="ECO:0000305" key="17"/>
<evidence type="ECO:0000305" key="18">
    <source>
    </source>
</evidence>
<evidence type="ECO:0000305" key="19">
    <source>
    </source>
</evidence>
<evidence type="ECO:0000305" key="20">
    <source>
    </source>
</evidence>
<accession>Q2PBY5</accession>
<protein>
    <recommendedName>
        <fullName evidence="18">D-lysergyl-peptide-synthetase subunit 3</fullName>
        <shortName evidence="17">LPS3</shortName>
        <ecNumber evidence="9">2.3.1.-</ecNumber>
    </recommendedName>
    <alternativeName>
        <fullName evidence="16">Ergot alkaloid synthesis protein lpsC</fullName>
    </alternativeName>
    <alternativeName>
        <fullName evidence="15">Nonribosomal peptide synthetase 3</fullName>
    </alternativeName>
</protein>
<dbReference type="EC" id="2.3.1.-" evidence="9"/>
<dbReference type="EMBL" id="AJ884677">
    <property type="protein sequence ID" value="CAI59267.1"/>
    <property type="molecule type" value="Genomic_DNA"/>
</dbReference>
<dbReference type="VEuPathDB" id="FungiDB:CPUR_04085"/>
<dbReference type="UniPathway" id="UPA00327"/>
<dbReference type="GO" id="GO:0005737">
    <property type="term" value="C:cytoplasm"/>
    <property type="evidence" value="ECO:0007669"/>
    <property type="project" value="TreeGrafter"/>
</dbReference>
<dbReference type="GO" id="GO:0016874">
    <property type="term" value="F:ligase activity"/>
    <property type="evidence" value="ECO:0007669"/>
    <property type="project" value="UniProtKB-KW"/>
</dbReference>
<dbReference type="GO" id="GO:0031177">
    <property type="term" value="F:phosphopantetheine binding"/>
    <property type="evidence" value="ECO:0007669"/>
    <property type="project" value="TreeGrafter"/>
</dbReference>
<dbReference type="GO" id="GO:0016740">
    <property type="term" value="F:transferase activity"/>
    <property type="evidence" value="ECO:0007669"/>
    <property type="project" value="UniProtKB-KW"/>
</dbReference>
<dbReference type="GO" id="GO:0043041">
    <property type="term" value="P:amino acid activation for nonribosomal peptide biosynthetic process"/>
    <property type="evidence" value="ECO:0007669"/>
    <property type="project" value="TreeGrafter"/>
</dbReference>
<dbReference type="GO" id="GO:0035835">
    <property type="term" value="P:indole alkaloid biosynthetic process"/>
    <property type="evidence" value="ECO:0007669"/>
    <property type="project" value="UniProtKB-UniPathway"/>
</dbReference>
<dbReference type="CDD" id="cd05918">
    <property type="entry name" value="A_NRPS_SidN3_like"/>
    <property type="match status" value="1"/>
</dbReference>
<dbReference type="Gene3D" id="3.30.300.30">
    <property type="match status" value="1"/>
</dbReference>
<dbReference type="Gene3D" id="1.10.1200.10">
    <property type="entry name" value="ACP-like"/>
    <property type="match status" value="1"/>
</dbReference>
<dbReference type="Gene3D" id="3.30.559.10">
    <property type="entry name" value="Chloramphenicol acetyltransferase-like domain"/>
    <property type="match status" value="1"/>
</dbReference>
<dbReference type="Gene3D" id="3.40.50.12780">
    <property type="entry name" value="N-terminal domain of ligase-like"/>
    <property type="match status" value="1"/>
</dbReference>
<dbReference type="Gene3D" id="3.40.50.720">
    <property type="entry name" value="NAD(P)-binding Rossmann-like Domain"/>
    <property type="match status" value="1"/>
</dbReference>
<dbReference type="Gene3D" id="3.30.559.30">
    <property type="entry name" value="Nonribosomal peptide synthetase, condensation domain"/>
    <property type="match status" value="1"/>
</dbReference>
<dbReference type="InterPro" id="IPR036736">
    <property type="entry name" value="ACP-like_sf"/>
</dbReference>
<dbReference type="InterPro" id="IPR045851">
    <property type="entry name" value="AMP-bd_C_sf"/>
</dbReference>
<dbReference type="InterPro" id="IPR000873">
    <property type="entry name" value="AMP-dep_synth/lig_dom"/>
</dbReference>
<dbReference type="InterPro" id="IPR042099">
    <property type="entry name" value="ANL_N_sf"/>
</dbReference>
<dbReference type="InterPro" id="IPR023213">
    <property type="entry name" value="CAT-like_dom_sf"/>
</dbReference>
<dbReference type="InterPro" id="IPR001242">
    <property type="entry name" value="Condensatn"/>
</dbReference>
<dbReference type="InterPro" id="IPR013120">
    <property type="entry name" value="Far_NAD-bd"/>
</dbReference>
<dbReference type="InterPro" id="IPR036291">
    <property type="entry name" value="NAD(P)-bd_dom_sf"/>
</dbReference>
<dbReference type="InterPro" id="IPR009081">
    <property type="entry name" value="PP-bd_ACP"/>
</dbReference>
<dbReference type="InterPro" id="IPR006162">
    <property type="entry name" value="Ppantetheine_attach_site"/>
</dbReference>
<dbReference type="InterPro" id="IPR010080">
    <property type="entry name" value="Thioester_reductase-like_dom"/>
</dbReference>
<dbReference type="NCBIfam" id="TIGR01746">
    <property type="entry name" value="Thioester-redct"/>
    <property type="match status" value="1"/>
</dbReference>
<dbReference type="PANTHER" id="PTHR45527:SF16">
    <property type="entry name" value="NONRIBOSOMAL PEPTIDE SYNTHASE ATNA-RELATED"/>
    <property type="match status" value="1"/>
</dbReference>
<dbReference type="PANTHER" id="PTHR45527">
    <property type="entry name" value="NONRIBOSOMAL PEPTIDE SYNTHETASE"/>
    <property type="match status" value="1"/>
</dbReference>
<dbReference type="Pfam" id="PF00501">
    <property type="entry name" value="AMP-binding"/>
    <property type="match status" value="1"/>
</dbReference>
<dbReference type="Pfam" id="PF00668">
    <property type="entry name" value="Condensation"/>
    <property type="match status" value="1"/>
</dbReference>
<dbReference type="Pfam" id="PF07993">
    <property type="entry name" value="NAD_binding_4"/>
    <property type="match status" value="1"/>
</dbReference>
<dbReference type="Pfam" id="PF00550">
    <property type="entry name" value="PP-binding"/>
    <property type="match status" value="1"/>
</dbReference>
<dbReference type="PIRSF" id="PIRSF001617">
    <property type="entry name" value="Alpha-AR"/>
    <property type="match status" value="1"/>
</dbReference>
<dbReference type="SUPFAM" id="SSF56801">
    <property type="entry name" value="Acetyl-CoA synthetase-like"/>
    <property type="match status" value="1"/>
</dbReference>
<dbReference type="SUPFAM" id="SSF47336">
    <property type="entry name" value="ACP-like"/>
    <property type="match status" value="1"/>
</dbReference>
<dbReference type="SUPFAM" id="SSF52777">
    <property type="entry name" value="CoA-dependent acyltransferases"/>
    <property type="match status" value="2"/>
</dbReference>
<dbReference type="SUPFAM" id="SSF51735">
    <property type="entry name" value="NAD(P)-binding Rossmann-fold domains"/>
    <property type="match status" value="1"/>
</dbReference>
<dbReference type="PROSITE" id="PS50075">
    <property type="entry name" value="CARRIER"/>
    <property type="match status" value="1"/>
</dbReference>
<dbReference type="PROSITE" id="PS00012">
    <property type="entry name" value="PHOSPHOPANTETHEINE"/>
    <property type="match status" value="1"/>
</dbReference>
<keyword id="KW-0436">Ligase</keyword>
<keyword id="KW-0596">Phosphopantetheine</keyword>
<keyword id="KW-0597">Phosphoprotein</keyword>
<keyword id="KW-0808">Transferase</keyword>
<sequence length="1633" mass="179437">MVVCVLSGKVCYLSYNVTRVSDDQAAHVAATFETVAKCIADAPHRLIQEVEVLSQLDVDRLKTWNAYQPIAVETCYQDLFRQRCDLHPDSPAVVAWDGSFTYDELDHFSSLLATRLQAAGIGPDVFVTICATRCRWIPVAMLGIIKARGAFCALDLSHPLDRLKDICDALKSTITITTPTDSNIARKLASTVIVIGGDAPVESDRITPMNDRPKPTNGHPRNALYSVFTSGSSGKPKGVVVEHRSFVSSALASIQPLDIRPHDRLLHFSAYAFDISVFEVLTPLISGATIAIPSEKRRKESLTHAVQELGATWALLTPTVARLYDPDEFPSLRTLALGGELAQTSDIALWQSKNVVIIYNPAECCPIGVSGPACPADGRFLGRSHTCQRAWIVDPRDHDKLLPIGAVGELLIEGPVVARCYAHDPNFSSPDSPFIQSTPSWMLRLRSNTSSGTRLYRTGDLARYGSDASLYYMGRKDSQIKIRGQRTEPGEIESNLHSILSKDKLGVAIVVLELRGSSKIIAFVSKDTGGLGGDSNTVGQLRIEAATEETDMCIIKATSKLHRIMPAYMVPSAFLSVNYIPISRSGKIDRTRLKSFALSLPQETLLRVNNGLETGDLPESNEEHRLQRMYSLVLGISRDKIGMESDFFRLGGDSLQAMKLLALAPKEGLTDISYEDIFRYPRLKDLARKASQSVTIKKDGFGENSSVIHPFSLVIDGQSLIDMAAKQCNIERDSIEDIYPCTPMQASIMSLAVKGKIVSFLTFGLALRDHVDTKRVKDTWHAAYRANSLLRTRIIVCAETGQLYQVVVGGDIFWDDDECGNFAQPESGPSASIGGPLVRMKLVEGQLSIAIHRALYDNWSIRQLLNDISGAYNGLPLPSRPSFNCYVSYAAKSLEAASSFWSAELGDADLDAAKYPEPVSQNSHTNSRAWLGIRVVTCQKESIDVLASEFRLAWAMITYARTNKKDVVFGVLSSGRSNASKDTKEIMGPIATVTPLRVTIDGTQDVGGALEELQYRQEEQAMYTHLGLRRIGQLGRNAAAACQIQTVLIVEPDLPDLRGVWFSNDATLPNHSDADASNYRLTIKCVVGPDCTDIFAIFDHQSLPIMEVKEILSQFEHILGQIHGKEASQLSVASIDTANFKDWDTLHKSTEMPSVCRNGLLLSDPTFLPHDQMKTFPAIEEAAAHCVFQDSLQEASIARDAKMQPKEPLSSADLISEINRYDLAXXRSRPSPESILLSELALTGESHSSGTHTVFVTGASGFIGTQILRHCLEDPRIDHVIALVRGSSANEARSRTEESARRAQWWSDCHSQKLEVWPGDLAMPHLGLNETHWRRLADRTTINAIIHNGASVHWLKRYADLEATNVGATAQLLQLAVANPRLGFVYVSSGRYTDPNAEAEEPAAANVAATAMPYSQTKFVAESPIRRTAARLPHGQTQVRIISLGLVIGDPLTGVVNADDYLWRLIATCVQAGEYNSSAGSEWMPISDVTSTALAIVQTALNPAGVPATIKPITGGLMWSEIWDLVTDMGYDMEPRPESEWMATVRRDLKREQEKHPLWTLSHLVESRSQLNTDAGAGSAWADAWRGDEATTRNLRTAFRRSLRFLGEVGFLPGQKGRNTDGEVNGRAFRRAW</sequence>
<feature type="chain" id="PRO_0000439113" description="D-lysergyl-peptide-synthetase subunit 3">
    <location>
        <begin position="1"/>
        <end position="1633"/>
    </location>
</feature>
<feature type="domain" description="Carrier" evidence="3">
    <location>
        <begin position="622"/>
        <end position="691"/>
    </location>
</feature>
<feature type="region of interest" description="Adenylation (A) domain" evidence="2">
    <location>
        <begin position="80"/>
        <end position="483"/>
    </location>
</feature>
<feature type="region of interest" description="Condensation (C) domain" evidence="2">
    <location>
        <begin position="836"/>
        <end position="1127"/>
    </location>
</feature>
<feature type="region of interest" description="Reductase (R) domain" evidence="2">
    <location>
        <begin position="1256"/>
        <end position="1483"/>
    </location>
</feature>
<feature type="modified residue" description="O-(pantetheine 4'-phosphoryl)serine" evidence="3">
    <location>
        <position position="654"/>
    </location>
</feature>
<comment type="function">
    <text evidence="1 4 5 6 7 8 9 10 11 12 13 14 19 20">D-lysergyl-peptide-synthetase subunit 3; part of the gene cluster that mediates the biosynthesis of fungal ergot alkaloid (PubMed:14700635, PubMed:14732265, PubMed:15904941, PubMed:17308187, PubMed:17720822). DmaW catalyzes the first step of ergot alkaloid biosynthesis by condensing dimethylallyl diphosphate (DMAP) and tryptophan to form 4-dimethylallyl-L-tryptophan (PubMed:14732265). The second step is catalyzed by the methyltransferase easF that methylates 4-dimethylallyl-L-tryptophan in the presence of S-adenosyl-L-methionine, resulting in the formation of 4-dimethylallyl-L-abrine (By similarity). The catalase easC and the FAD-dependent oxidoreductase easE then transform 4-dimethylallyl-L-abrine to chanoclavine-I which is further oxidized by easD in the presence of NAD(+), resulting in the formation of chanoclavine-I aldehyde (PubMed:20118373, PubMed:21409592). Agroclavine dehydrogenase easG then mediates the conversion of chanoclavine-I aldehyde to agroclavine via a non-enzymatic adduct reaction: the substrate is an iminium intermediate that is formed spontaneously from chanoclavine-I aldehyde in the presence of glutathione (PubMed:20735127, PubMed:21494745). The presence of easA is not required to complete this reaction (PubMed:21494745). Further conversion of agroclavine to paspalic acid is a two-step process involving oxidation of agroclavine to elymoclavine and of elymoclavine to paspalic acid, the second step being performed by the elymoclavine oxidase cloA (PubMed:16538694, PubMed:17720822). Paspalic acid is then further converted to D-lysergic acid (PubMed:15904941). Ergopeptines are assembled from D-lysergic acid and three different amino acids by the D-lysergyl-peptide-synthetases composed each of a monomudular and a trimodular nonribosomal peptide synthetase subunit (PubMed:14700635, PubMed:15904941). LpsB and lpsC encode the monomodular subunits responsible for D-lysergic acid activation and incorporation into the ergopeptine backbone (PubMed:14700635). LpsA1 and A2 subunits encode the trimodular nonribosomal peptide synthetase assembling the tripeptide portion of ergopeptines (PubMed:14700635). LpsA1 is responsible for formation of the major ergopeptine, ergotamine, and lpsA2 for alpha-ergocryptine, the minor ergopeptine of the total alkaloid mixture elaborated by C.purpurea (PubMed:17560817, PubMed:19139103). D-lysergyl-tripeptides are assembled by the nonribosomal peptide synthetases and released as N-(D-lysergyl-aminoacyl)-lactams (PubMed:24361048). Cyclolization of the D-lysergyl-tripeptides is performed by the Fe(2+)/2-ketoglutarate-dependent dioxygenase easH which introduces a hydroxyl group into N-(D-lysergyl-aminoacyl)-lactam at alpha-C of the aminoacyl residue followed by spontaneous condensation with the terminal lactam carbonyl group (PubMed:24361048).</text>
</comment>
<comment type="pathway">
    <text evidence="9">Alkaloid biosynthesis; ergot alkaloid biosynthesis.</text>
</comment>
<comment type="domain">
    <text evidence="4">NRP synthetases are composed of discrete domains (adenylation (A), thiolation (T) or peptidyl carrier protein (PCP) and condensation (C) domains) which when grouped together are referred to as a single module (PubMed:14700635). Each module is responsible for the recognition (via the A domain) and incorporation of a single amino acid into the growing peptide product (PubMed:14700635). Thus, an NRP synthetase is generally composed of one or more modules and can terminate in a thioesterase domain (TE) or reductase domain (R) that releases the newly synthesized peptide from the enzyme (PubMed:14700635). LpsC is composed of only one module which is required for the activation of D-lysergic acid activation and its incorporation in the final ergot alkaloid (PubMed:19139103).</text>
</comment>
<comment type="similarity">
    <text evidence="17">Belongs to the NRP synthetase family.</text>
</comment>
<organism>
    <name type="scientific">Claviceps purpurea</name>
    <name type="common">Ergot fungus</name>
    <name type="synonym">Sphacelia segetum</name>
    <dbReference type="NCBI Taxonomy" id="5111"/>
    <lineage>
        <taxon>Eukaryota</taxon>
        <taxon>Fungi</taxon>
        <taxon>Dikarya</taxon>
        <taxon>Ascomycota</taxon>
        <taxon>Pezizomycotina</taxon>
        <taxon>Sordariomycetes</taxon>
        <taxon>Hypocreomycetidae</taxon>
        <taxon>Hypocreales</taxon>
        <taxon>Clavicipitaceae</taxon>
        <taxon>Claviceps</taxon>
    </lineage>
</organism>